<comment type="function">
    <text evidence="1">The RecF protein is involved in DNA metabolism; it is required for DNA replication and normal SOS inducibility. RecF binds preferentially to single-stranded, linear DNA. It also seems to bind ATP.</text>
</comment>
<comment type="subcellular location">
    <subcellularLocation>
        <location evidence="1">Cytoplasm</location>
    </subcellularLocation>
</comment>
<comment type="similarity">
    <text evidence="1">Belongs to the RecF family.</text>
</comment>
<evidence type="ECO:0000255" key="1">
    <source>
        <dbReference type="HAMAP-Rule" id="MF_00365"/>
    </source>
</evidence>
<gene>
    <name evidence="1" type="primary">recF</name>
    <name type="ordered locus">SPA3680</name>
</gene>
<protein>
    <recommendedName>
        <fullName evidence="1">DNA replication and repair protein RecF</fullName>
    </recommendedName>
</protein>
<dbReference type="EMBL" id="CP000026">
    <property type="protein sequence ID" value="AAV79472.1"/>
    <property type="molecule type" value="Genomic_DNA"/>
</dbReference>
<dbReference type="RefSeq" id="WP_000060078.1">
    <property type="nucleotide sequence ID" value="NC_006511.1"/>
</dbReference>
<dbReference type="SMR" id="Q5PKU8"/>
<dbReference type="KEGG" id="spt:SPA3680"/>
<dbReference type="HOGENOM" id="CLU_040267_0_0_6"/>
<dbReference type="Proteomes" id="UP000008185">
    <property type="component" value="Chromosome"/>
</dbReference>
<dbReference type="GO" id="GO:0005737">
    <property type="term" value="C:cytoplasm"/>
    <property type="evidence" value="ECO:0007669"/>
    <property type="project" value="UniProtKB-SubCell"/>
</dbReference>
<dbReference type="GO" id="GO:0005524">
    <property type="term" value="F:ATP binding"/>
    <property type="evidence" value="ECO:0007669"/>
    <property type="project" value="UniProtKB-UniRule"/>
</dbReference>
<dbReference type="GO" id="GO:0003697">
    <property type="term" value="F:single-stranded DNA binding"/>
    <property type="evidence" value="ECO:0007669"/>
    <property type="project" value="UniProtKB-UniRule"/>
</dbReference>
<dbReference type="GO" id="GO:0006260">
    <property type="term" value="P:DNA replication"/>
    <property type="evidence" value="ECO:0007669"/>
    <property type="project" value="UniProtKB-UniRule"/>
</dbReference>
<dbReference type="GO" id="GO:0000731">
    <property type="term" value="P:DNA synthesis involved in DNA repair"/>
    <property type="evidence" value="ECO:0007669"/>
    <property type="project" value="TreeGrafter"/>
</dbReference>
<dbReference type="GO" id="GO:0006302">
    <property type="term" value="P:double-strand break repair"/>
    <property type="evidence" value="ECO:0007669"/>
    <property type="project" value="TreeGrafter"/>
</dbReference>
<dbReference type="GO" id="GO:0009432">
    <property type="term" value="P:SOS response"/>
    <property type="evidence" value="ECO:0007669"/>
    <property type="project" value="UniProtKB-UniRule"/>
</dbReference>
<dbReference type="FunFam" id="1.20.1050.90:FF:000001">
    <property type="entry name" value="DNA replication and repair protein RecF"/>
    <property type="match status" value="1"/>
</dbReference>
<dbReference type="Gene3D" id="3.40.50.300">
    <property type="entry name" value="P-loop containing nucleotide triphosphate hydrolases"/>
    <property type="match status" value="1"/>
</dbReference>
<dbReference type="Gene3D" id="1.20.1050.90">
    <property type="entry name" value="RecF/RecN/SMC, N-terminal domain"/>
    <property type="match status" value="1"/>
</dbReference>
<dbReference type="HAMAP" id="MF_00365">
    <property type="entry name" value="RecF"/>
    <property type="match status" value="1"/>
</dbReference>
<dbReference type="InterPro" id="IPR001238">
    <property type="entry name" value="DNA-binding_RecF"/>
</dbReference>
<dbReference type="InterPro" id="IPR018078">
    <property type="entry name" value="DNA-binding_RecF_CS"/>
</dbReference>
<dbReference type="InterPro" id="IPR027417">
    <property type="entry name" value="P-loop_NTPase"/>
</dbReference>
<dbReference type="InterPro" id="IPR003395">
    <property type="entry name" value="RecF/RecN/SMC_N"/>
</dbReference>
<dbReference type="InterPro" id="IPR042174">
    <property type="entry name" value="RecF_2"/>
</dbReference>
<dbReference type="NCBIfam" id="TIGR00611">
    <property type="entry name" value="recf"/>
    <property type="match status" value="1"/>
</dbReference>
<dbReference type="PANTHER" id="PTHR32182">
    <property type="entry name" value="DNA REPLICATION AND REPAIR PROTEIN RECF"/>
    <property type="match status" value="1"/>
</dbReference>
<dbReference type="PANTHER" id="PTHR32182:SF0">
    <property type="entry name" value="DNA REPLICATION AND REPAIR PROTEIN RECF"/>
    <property type="match status" value="1"/>
</dbReference>
<dbReference type="Pfam" id="PF02463">
    <property type="entry name" value="SMC_N"/>
    <property type="match status" value="1"/>
</dbReference>
<dbReference type="SUPFAM" id="SSF52540">
    <property type="entry name" value="P-loop containing nucleoside triphosphate hydrolases"/>
    <property type="match status" value="1"/>
</dbReference>
<dbReference type="PROSITE" id="PS00617">
    <property type="entry name" value="RECF_1"/>
    <property type="match status" value="1"/>
</dbReference>
<dbReference type="PROSITE" id="PS00618">
    <property type="entry name" value="RECF_2"/>
    <property type="match status" value="1"/>
</dbReference>
<proteinExistence type="inferred from homology"/>
<name>RECF_SALPA</name>
<keyword id="KW-0067">ATP-binding</keyword>
<keyword id="KW-0963">Cytoplasm</keyword>
<keyword id="KW-0227">DNA damage</keyword>
<keyword id="KW-0234">DNA repair</keyword>
<keyword id="KW-0235">DNA replication</keyword>
<keyword id="KW-0238">DNA-binding</keyword>
<keyword id="KW-0547">Nucleotide-binding</keyword>
<keyword id="KW-0742">SOS response</keyword>
<organism>
    <name type="scientific">Salmonella paratyphi A (strain ATCC 9150 / SARB42)</name>
    <dbReference type="NCBI Taxonomy" id="295319"/>
    <lineage>
        <taxon>Bacteria</taxon>
        <taxon>Pseudomonadati</taxon>
        <taxon>Pseudomonadota</taxon>
        <taxon>Gammaproteobacteria</taxon>
        <taxon>Enterobacterales</taxon>
        <taxon>Enterobacteriaceae</taxon>
        <taxon>Salmonella</taxon>
    </lineage>
</organism>
<sequence>MSLTRLLIKDFRNIENADLALSPGFNFLVGANGSGKTSVLEAIYTLGHGRAFRSLQPGRVIRHEQEAFVLHGRLQGEEREMSIGLTKDKQGDSKVRIDGTDGHKIAELAHLMPMQLITPEGFTLLNGGPKYRRAFLDWGCFHNEAGFFTAWSNLKRLLKQRNAALRQVSRYEQLRPWDKELIPLAEQISTWRAEYSSAIAQDMADTCQQFLPEFSLTFSFQRGWEKETDYADVLERSFERDRMLTYTAHGPHKADFRIRADGAPVEDTLSRGQLKLLMCALRLAQGEFLTRESGRRCLYLIDDFASELDDARRGLLASRLKATQSQVFVSAISAEHVIDMSDENSKMFTVEKGKITD</sequence>
<feature type="chain" id="PRO_0000236142" description="DNA replication and repair protein RecF">
    <location>
        <begin position="1"/>
        <end position="357"/>
    </location>
</feature>
<feature type="binding site" evidence="1">
    <location>
        <begin position="30"/>
        <end position="37"/>
    </location>
    <ligand>
        <name>ATP</name>
        <dbReference type="ChEBI" id="CHEBI:30616"/>
    </ligand>
</feature>
<reference key="1">
    <citation type="journal article" date="2004" name="Nat. Genet.">
        <title>Comparison of genome degradation in Paratyphi A and Typhi, human-restricted serovars of Salmonella enterica that cause typhoid.</title>
        <authorList>
            <person name="McClelland M."/>
            <person name="Sanderson K.E."/>
            <person name="Clifton S.W."/>
            <person name="Latreille P."/>
            <person name="Porwollik S."/>
            <person name="Sabo A."/>
            <person name="Meyer R."/>
            <person name="Bieri T."/>
            <person name="Ozersky P."/>
            <person name="McLellan M."/>
            <person name="Harkins C.R."/>
            <person name="Wang C."/>
            <person name="Nguyen C."/>
            <person name="Berghoff A."/>
            <person name="Elliott G."/>
            <person name="Kohlberg S."/>
            <person name="Strong C."/>
            <person name="Du F."/>
            <person name="Carter J."/>
            <person name="Kremizki C."/>
            <person name="Layman D."/>
            <person name="Leonard S."/>
            <person name="Sun H."/>
            <person name="Fulton L."/>
            <person name="Nash W."/>
            <person name="Miner T."/>
            <person name="Minx P."/>
            <person name="Delehaunty K."/>
            <person name="Fronick C."/>
            <person name="Magrini V."/>
            <person name="Nhan M."/>
            <person name="Warren W."/>
            <person name="Florea L."/>
            <person name="Spieth J."/>
            <person name="Wilson R.K."/>
        </authorList>
    </citation>
    <scope>NUCLEOTIDE SEQUENCE [LARGE SCALE GENOMIC DNA]</scope>
    <source>
        <strain>ATCC 9150 / SARB42</strain>
    </source>
</reference>
<accession>Q5PKU8</accession>